<feature type="chain" id="PRO_0000451088" description="Esterase PE11">
    <location>
        <begin position="1"/>
        <end position="100"/>
    </location>
</feature>
<feature type="domain" description="PE" evidence="1">
    <location>
        <begin position="4"/>
        <end position="94"/>
    </location>
</feature>
<dbReference type="EC" id="3.1.1.6" evidence="6"/>
<dbReference type="EMBL" id="AL123456">
    <property type="protein sequence ID" value="CCP43925.1"/>
    <property type="molecule type" value="Genomic_DNA"/>
</dbReference>
<dbReference type="RefSeq" id="WP_003898752.1">
    <property type="nucleotide sequence ID" value="NZ_NVQJ01000025.1"/>
</dbReference>
<dbReference type="RefSeq" id="YP_177792.1">
    <property type="nucleotide sequence ID" value="NC_000962.3"/>
</dbReference>
<dbReference type="SMR" id="Q79FR5"/>
<dbReference type="STRING" id="83332.Rv1169c"/>
<dbReference type="PaxDb" id="83332-Rv1169c"/>
<dbReference type="GeneID" id="45425141"/>
<dbReference type="GeneID" id="885930"/>
<dbReference type="KEGG" id="mtu:Rv1169c"/>
<dbReference type="KEGG" id="mtv:RVBD_1169c"/>
<dbReference type="PATRIC" id="fig|83332.111.peg.1310"/>
<dbReference type="TubercuList" id="Rv1169c"/>
<dbReference type="InParanoid" id="Q79FR5"/>
<dbReference type="OrthoDB" id="4764589at2"/>
<dbReference type="PhylomeDB" id="Q79FR5"/>
<dbReference type="Proteomes" id="UP000001584">
    <property type="component" value="Chromosome"/>
</dbReference>
<dbReference type="GO" id="GO:0005576">
    <property type="term" value="C:extracellular region"/>
    <property type="evidence" value="ECO:0007669"/>
    <property type="project" value="UniProtKB-KW"/>
</dbReference>
<dbReference type="GO" id="GO:0008126">
    <property type="term" value="F:acetylesterase activity"/>
    <property type="evidence" value="ECO:0007669"/>
    <property type="project" value="UniProtKB-EC"/>
</dbReference>
<dbReference type="GO" id="GO:0004806">
    <property type="term" value="F:triacylglycerol lipase activity"/>
    <property type="evidence" value="ECO:0000314"/>
    <property type="project" value="MTBBASE"/>
</dbReference>
<dbReference type="GO" id="GO:0071555">
    <property type="term" value="P:cell wall organization"/>
    <property type="evidence" value="ECO:0007669"/>
    <property type="project" value="UniProtKB-KW"/>
</dbReference>
<dbReference type="Gene3D" id="1.10.287.850">
    <property type="entry name" value="HP0062-like domain"/>
    <property type="match status" value="1"/>
</dbReference>
<dbReference type="InterPro" id="IPR000084">
    <property type="entry name" value="PE-PGRS_N"/>
</dbReference>
<dbReference type="Pfam" id="PF00934">
    <property type="entry name" value="PE"/>
    <property type="match status" value="1"/>
</dbReference>
<dbReference type="SUPFAM" id="SSF140459">
    <property type="entry name" value="PE/PPE dimer-like"/>
    <property type="match status" value="1"/>
</dbReference>
<gene>
    <name evidence="9" type="primary">PE11</name>
    <name evidence="8" type="synonym">lipX</name>
    <name evidence="11" type="ordered locus">Rv1169c</name>
</gene>
<protein>
    <recommendedName>
        <fullName evidence="10">Esterase PE11</fullName>
        <ecNumber evidence="6">3.1.1.6</ecNumber>
    </recommendedName>
    <alternativeName>
        <fullName evidence="10">PE family protein PE11</fullName>
    </alternativeName>
</protein>
<proteinExistence type="evidence at protein level"/>
<keyword id="KW-0134">Cell wall</keyword>
<keyword id="KW-0961">Cell wall biogenesis/degradation</keyword>
<keyword id="KW-0378">Hydrolase</keyword>
<keyword id="KW-1185">Reference proteome</keyword>
<keyword id="KW-0964">Secreted</keyword>
<keyword id="KW-0843">Virulence</keyword>
<sequence length="100" mass="10872">MSFVTTRPDSIGETAANLHEIGVTMSAHDDGVTPLITNVESPAHDLVSIVTSMLFSMHGELYKAIARQAHVIHESFVQTLQTSKTSYWLTELANRAGTST</sequence>
<name>PE11_MYCTU</name>
<accession>Q79FR5</accession>
<accession>I6XX98</accession>
<accession>L0T7I0</accession>
<organism>
    <name type="scientific">Mycobacterium tuberculosis (strain ATCC 25618 / H37Rv)</name>
    <dbReference type="NCBI Taxonomy" id="83332"/>
    <lineage>
        <taxon>Bacteria</taxon>
        <taxon>Bacillati</taxon>
        <taxon>Actinomycetota</taxon>
        <taxon>Actinomycetes</taxon>
        <taxon>Mycobacteriales</taxon>
        <taxon>Mycobacteriaceae</taxon>
        <taxon>Mycobacterium</taxon>
        <taxon>Mycobacterium tuberculosis complex</taxon>
    </lineage>
</organism>
<evidence type="ECO:0000255" key="1"/>
<evidence type="ECO:0000269" key="2">
    <source>
    </source>
</evidence>
<evidence type="ECO:0000269" key="3">
    <source>
    </source>
</evidence>
<evidence type="ECO:0000269" key="4">
    <source>
    </source>
</evidence>
<evidence type="ECO:0000269" key="5">
    <source>
    </source>
</evidence>
<evidence type="ECO:0000269" key="6">
    <source>
    </source>
</evidence>
<evidence type="ECO:0000269" key="7">
    <source>
    </source>
</evidence>
<evidence type="ECO:0000303" key="8">
    <source>
    </source>
</evidence>
<evidence type="ECO:0000303" key="9">
    <source>
    </source>
</evidence>
<evidence type="ECO:0000305" key="10"/>
<evidence type="ECO:0000312" key="11">
    <source>
        <dbReference type="EMBL" id="CCP43925.1"/>
    </source>
</evidence>
<comment type="function">
    <text evidence="2 4 5 6 7">Involved in cell wall lipids remodeling and in virulence (PubMed:26157429, PubMed:26902658, PubMed:28198348). Restricts the biofilm growth and is essential for the optimal intracellular survival of M.tuberculosis (PubMed:28198348). Shows esterase activity with a preference for short-chain esters, particularly pNP-acetate (C2) and pNP-butyrate (C4) (PubMed:26902658). Has weaker activity with pNP-octanoate (C8), pNP-laurate (C12) and pNP-myristate (C14) (PubMed:26902658). Shows weak long-chain triacylglycerol (TAG) hydrolase activity in vitro (PubMed:16354661). Not necessary for PPE17 stability or for its localization on the mycobacterial surface (PubMed:23469198).</text>
</comment>
<comment type="catalytic activity">
    <reaction evidence="6">
        <text>an acetyl ester + H2O = an aliphatic alcohol + acetate + H(+)</text>
        <dbReference type="Rhea" id="RHEA:12957"/>
        <dbReference type="ChEBI" id="CHEBI:2571"/>
        <dbReference type="ChEBI" id="CHEBI:15377"/>
        <dbReference type="ChEBI" id="CHEBI:15378"/>
        <dbReference type="ChEBI" id="CHEBI:30089"/>
        <dbReference type="ChEBI" id="CHEBI:47622"/>
        <dbReference type="EC" id="3.1.1.6"/>
    </reaction>
</comment>
<comment type="catalytic activity">
    <reaction evidence="6">
        <text>a butanoate ester + H2O = an aliphatic alcohol + butanoate + H(+)</text>
        <dbReference type="Rhea" id="RHEA:47348"/>
        <dbReference type="ChEBI" id="CHEBI:2571"/>
        <dbReference type="ChEBI" id="CHEBI:15377"/>
        <dbReference type="ChEBI" id="CHEBI:15378"/>
        <dbReference type="ChEBI" id="CHEBI:17968"/>
        <dbReference type="ChEBI" id="CHEBI:50477"/>
    </reaction>
</comment>
<comment type="catalytic activity">
    <reaction evidence="6">
        <text>an octanoate ester + H2O = an aliphatic alcohol + octanoate + H(+)</text>
        <dbReference type="Rhea" id="RHEA:47356"/>
        <dbReference type="ChEBI" id="CHEBI:2571"/>
        <dbReference type="ChEBI" id="CHEBI:15377"/>
        <dbReference type="ChEBI" id="CHEBI:15378"/>
        <dbReference type="ChEBI" id="CHEBI:25646"/>
        <dbReference type="ChEBI" id="CHEBI:87657"/>
    </reaction>
</comment>
<comment type="subcellular location">
    <subcellularLocation>
        <location evidence="5">Secreted</location>
        <location evidence="5">Cell wall</location>
    </subcellularLocation>
    <text evidence="5">Cell wall associated protein.</text>
</comment>
<comment type="induction">
    <text evidence="4 7">Coexpressed with PPE17.</text>
</comment>
<comment type="disruption phenotype">
    <text evidence="7">Knock-down of the gene alters the colony morphology and slows down growth. Knock-down induces aggregation, early biofilm formation and changes in cell wall lipid composition. It also results in decreased survival of Mycobacterium inside macrophages and reduced necrotic death of THP-1 macrophages.</text>
</comment>
<comment type="miscellaneous">
    <text evidence="3">Elicits a strong B-cell humoral response among different clinical categories of both adult and child tuberculosis patients.</text>
</comment>
<comment type="miscellaneous">
    <text evidence="5 6">Expression in non-pathogenic M.smegmatis (Msmeg) strain induces necrotic cell death of macrophage after infection and significantly decreased IL-6 production compared to controls (PubMed:26157429). Msmeg-PE11 bacilli exhibit altered colony morphology and cell wall lipid composition leading to a marked increase in resistance against various environmental stressors and antibiotics (PubMed:26902658). Mice infected with Msmeg-PE11 have higher bacterial load, show exacerbated organ pathology and mortality. The liver and lung of Msmeg-PE11-infected mice have higher levels of IL-10, IL-4 and TNF-alpha cytokines (PubMed:26902658).</text>
</comment>
<comment type="similarity">
    <text evidence="10">Belongs to the mycobacterial PE family.</text>
</comment>
<reference key="1">
    <citation type="journal article" date="1998" name="Nature">
        <title>Deciphering the biology of Mycobacterium tuberculosis from the complete genome sequence.</title>
        <authorList>
            <person name="Cole S.T."/>
            <person name="Brosch R."/>
            <person name="Parkhill J."/>
            <person name="Garnier T."/>
            <person name="Churcher C.M."/>
            <person name="Harris D.E."/>
            <person name="Gordon S.V."/>
            <person name="Eiglmeier K."/>
            <person name="Gas S."/>
            <person name="Barry C.E. III"/>
            <person name="Tekaia F."/>
            <person name="Badcock K."/>
            <person name="Basham D."/>
            <person name="Brown D."/>
            <person name="Chillingworth T."/>
            <person name="Connor R."/>
            <person name="Davies R.M."/>
            <person name="Devlin K."/>
            <person name="Feltwell T."/>
            <person name="Gentles S."/>
            <person name="Hamlin N."/>
            <person name="Holroyd S."/>
            <person name="Hornsby T."/>
            <person name="Jagels K."/>
            <person name="Krogh A."/>
            <person name="McLean J."/>
            <person name="Moule S."/>
            <person name="Murphy L.D."/>
            <person name="Oliver S."/>
            <person name="Osborne J."/>
            <person name="Quail M.A."/>
            <person name="Rajandream M.A."/>
            <person name="Rogers J."/>
            <person name="Rutter S."/>
            <person name="Seeger K."/>
            <person name="Skelton S."/>
            <person name="Squares S."/>
            <person name="Squares R."/>
            <person name="Sulston J.E."/>
            <person name="Taylor K."/>
            <person name="Whitehead S."/>
            <person name="Barrell B.G."/>
        </authorList>
    </citation>
    <scope>NUCLEOTIDE SEQUENCE [LARGE SCALE GENOMIC DNA]</scope>
    <source>
        <strain>ATCC 25618 / H37Rv</strain>
    </source>
</reference>
<reference key="2">
    <citation type="journal article" date="2006" name="J. Biol. Chem.">
        <title>A novel lipase belonging to the hormone-sensitive lipase family induced under starvation to utilize stored triacylglycerol in Mycobacterium tuberculosis.</title>
        <authorList>
            <person name="Deb C."/>
            <person name="Daniel J."/>
            <person name="Sirakova T.D."/>
            <person name="Abomoelak B."/>
            <person name="Dubey V.S."/>
            <person name="Kolattukudy P.E."/>
        </authorList>
    </citation>
    <scope>FUNCTION</scope>
</reference>
<reference key="3">
    <citation type="journal article" date="2007" name="Clin. Vaccine Immunol.">
        <title>Differential B-cell responses are induced by Mycobacterium tuberculosis PE antigens Rv1169c, Rv0978c, and Rv1818c.</title>
        <authorList>
            <person name="Narayana Y."/>
            <person name="Joshi B."/>
            <person name="Katoch V.M."/>
            <person name="Mishra K.C."/>
            <person name="Balaji K.N."/>
        </authorList>
    </citation>
    <scope>INVOLVEMENT IN B-CELL RESPONSE</scope>
</reference>
<reference key="4">
    <citation type="journal article" date="2011" name="Mol. Cell. Proteomics">
        <title>Proteogenomic analysis of Mycobacterium tuberculosis by high resolution mass spectrometry.</title>
        <authorList>
            <person name="Kelkar D.S."/>
            <person name="Kumar D."/>
            <person name="Kumar P."/>
            <person name="Balakrishnan L."/>
            <person name="Muthusamy B."/>
            <person name="Yadav A.K."/>
            <person name="Shrivastava P."/>
            <person name="Marimuthu A."/>
            <person name="Anand S."/>
            <person name="Sundaram H."/>
            <person name="Kingsbury R."/>
            <person name="Harsha H.C."/>
            <person name="Nair B."/>
            <person name="Prasad T.S."/>
            <person name="Chauhan D.S."/>
            <person name="Katoch K."/>
            <person name="Katoch V.M."/>
            <person name="Kumar P."/>
            <person name="Chaerkady R."/>
            <person name="Ramachandran S."/>
            <person name="Dash D."/>
            <person name="Pandey A."/>
        </authorList>
    </citation>
    <scope>IDENTIFICATION BY MASS SPECTROMETRY [LARGE SCALE ANALYSIS]</scope>
    <source>
        <strain>ATCC 25618 / H37Rv</strain>
    </source>
</reference>
<reference key="5">
    <citation type="journal article" date="2013" name="PLoS ONE">
        <title>The PPE domain of PPE17 is responsible for its surface localization and can be used to express heterologous proteins on the mycobacterial surface.</title>
        <authorList>
            <person name="Dona V."/>
            <person name="Ventura M."/>
            <person name="Sali M."/>
            <person name="Cascioferro A."/>
            <person name="Provvedi R."/>
            <person name="Palu G."/>
            <person name="Delogu G."/>
            <person name="Manganelli R."/>
        </authorList>
    </citation>
    <scope>FUNCTION</scope>
    <scope>INDUCTION</scope>
</reference>
<reference key="6">
    <citation type="journal article" date="2015" name="Front. Microbiol.">
        <title>PE11 (Rv1169c) selectively alters fatty acid components of Mycobacterium smegmatis and host cell interleukin-6 level accompanied with cell death.</title>
        <authorList>
            <person name="Deng W."/>
            <person name="Zeng J."/>
            <person name="Xiang X."/>
            <person name="Li P."/>
            <person name="Xie J."/>
        </authorList>
    </citation>
    <scope>FUNCTION</scope>
    <scope>EXPRESSION IN M.SMEGMATIS</scope>
    <scope>SUBCELLULAR LOCATION</scope>
</reference>
<reference key="7">
    <citation type="journal article" date="2016" name="Sci. Rep.">
        <title>PE11, a PE/PPE family protein of Mycobacterium tuberculosis is involved in cell wall remodeling and virulence.</title>
        <authorList>
            <person name="Singh P."/>
            <person name="Rao R.N."/>
            <person name="Reddy J.R."/>
            <person name="Prasad R.B."/>
            <person name="Kotturu S.K."/>
            <person name="Ghosh S."/>
            <person name="Mukhopadhyay S."/>
        </authorList>
    </citation>
    <scope>FUNCTION</scope>
    <scope>CATALYTIC ACTIVITY</scope>
    <scope>EXPRESSION IN M.SMEGMATIS</scope>
</reference>
<reference key="8">
    <citation type="journal article" date="2017" name="Microbiology">
        <title>Down-regulation of PE11, a cell wall associated esterase, enhances the biofilm growth of Mycobacterium tuberculosis and reduces cell wall virulence lipid levels.</title>
        <authorList>
            <person name="Rastogi S."/>
            <person name="Singh A.K."/>
            <person name="Pant G."/>
            <person name="Mitra K."/>
            <person name="Sashidhara K.V."/>
            <person name="Krishnan M.Y."/>
        </authorList>
    </citation>
    <scope>FUNCTION</scope>
    <scope>INDUCTION</scope>
    <scope>DISRUPTION PHENOTYPE</scope>
</reference>